<protein>
    <recommendedName>
        <fullName evidence="1">Ribose import ATP-binding protein RbsA 2</fullName>
        <ecNumber evidence="1">7.5.2.7</ecNumber>
    </recommendedName>
</protein>
<feature type="chain" id="PRO_0000261084" description="Ribose import ATP-binding protein RbsA 2">
    <location>
        <begin position="1"/>
        <end position="512"/>
    </location>
</feature>
<feature type="domain" description="ABC transporter 1" evidence="1">
    <location>
        <begin position="22"/>
        <end position="258"/>
    </location>
</feature>
<feature type="domain" description="ABC transporter 2" evidence="1">
    <location>
        <begin position="263"/>
        <end position="512"/>
    </location>
</feature>
<feature type="binding site" evidence="1">
    <location>
        <begin position="54"/>
        <end position="61"/>
    </location>
    <ligand>
        <name>ATP</name>
        <dbReference type="ChEBI" id="CHEBI:30616"/>
    </ligand>
</feature>
<proteinExistence type="inferred from homology"/>
<geneLocation type="plasmid">
    <name>pRL11</name>
</geneLocation>
<organism>
    <name type="scientific">Rhizobium johnstonii (strain DSM 114642 / LMG 32736 / 3841)</name>
    <name type="common">Rhizobium leguminosarum bv. viciae</name>
    <dbReference type="NCBI Taxonomy" id="216596"/>
    <lineage>
        <taxon>Bacteria</taxon>
        <taxon>Pseudomonadati</taxon>
        <taxon>Pseudomonadota</taxon>
        <taxon>Alphaproteobacteria</taxon>
        <taxon>Hyphomicrobiales</taxon>
        <taxon>Rhizobiaceae</taxon>
        <taxon>Rhizobium/Agrobacterium group</taxon>
        <taxon>Rhizobium</taxon>
        <taxon>Rhizobium johnstonii</taxon>
    </lineage>
</organism>
<keyword id="KW-0067">ATP-binding</keyword>
<keyword id="KW-0997">Cell inner membrane</keyword>
<keyword id="KW-1003">Cell membrane</keyword>
<keyword id="KW-0472">Membrane</keyword>
<keyword id="KW-0547">Nucleotide-binding</keyword>
<keyword id="KW-0614">Plasmid</keyword>
<keyword id="KW-0677">Repeat</keyword>
<keyword id="KW-0762">Sugar transport</keyword>
<keyword id="KW-1278">Translocase</keyword>
<keyword id="KW-0813">Transport</keyword>
<name>RBSA2_RHIJ3</name>
<sequence>MMNAAFQQTATDSKTGDAPAILEMRGISQIFPGVKALDNVSIALHPGTVTALIGENGAGKSTLVKILTGIYRPNEGEILVDGQPVTFASAQAAIDAGVTAIHQETVLFDELTVAENIFLGHAPRTRLRTIDWQAMNSRAKALLTALESNIDPTIRLKDFSIAQRHLVAIARALSIEARIVIMDEPTAALSRKEIDDLFRIVRGLKEKGKAILFISHKFDEVYEIADDFVVFRDGRAVGQGRLKETPQDEIVRMMVGRDVENAFPKVDVAFGGPVLEIRNYSHRTEFRDISFTLRQGEILGIYGLIGAGRSELSQSLFGITRPLSGKMMLEGREITIHSPQDAIRAGIVYVPEERGRHGLALPMPIFQNMTLPSLTRTSRRGFLRAAEEFALARKYAERLDLRAAALSVPVGTLSGGNQQKVVIGKWLATAPKVIILDEPTKGIDIGSKAAVHGFISELAAEGLSIIMVSSELPEIIGMSDRVLVMKEGLAAGIFERAELSPEALVRAATGNA</sequence>
<dbReference type="EC" id="7.5.2.7" evidence="1"/>
<dbReference type="EMBL" id="AM236085">
    <property type="protein sequence ID" value="CAK03365.1"/>
    <property type="molecule type" value="Genomic_DNA"/>
</dbReference>
<dbReference type="SMR" id="Q1M5X4"/>
<dbReference type="EnsemblBacteria" id="CAK03365">
    <property type="protein sequence ID" value="CAK03365"/>
    <property type="gene ID" value="pRL110412"/>
</dbReference>
<dbReference type="KEGG" id="rle:pRL110412"/>
<dbReference type="HOGENOM" id="CLU_000604_92_2_5"/>
<dbReference type="Proteomes" id="UP000006575">
    <property type="component" value="Plasmid pRL11"/>
</dbReference>
<dbReference type="GO" id="GO:0005886">
    <property type="term" value="C:plasma membrane"/>
    <property type="evidence" value="ECO:0007669"/>
    <property type="project" value="UniProtKB-SubCell"/>
</dbReference>
<dbReference type="GO" id="GO:0015611">
    <property type="term" value="F:ABC-type D-ribose transporter activity"/>
    <property type="evidence" value="ECO:0007669"/>
    <property type="project" value="UniProtKB-EC"/>
</dbReference>
<dbReference type="GO" id="GO:0005524">
    <property type="term" value="F:ATP binding"/>
    <property type="evidence" value="ECO:0007669"/>
    <property type="project" value="UniProtKB-KW"/>
</dbReference>
<dbReference type="GO" id="GO:0016887">
    <property type="term" value="F:ATP hydrolysis activity"/>
    <property type="evidence" value="ECO:0007669"/>
    <property type="project" value="InterPro"/>
</dbReference>
<dbReference type="CDD" id="cd03216">
    <property type="entry name" value="ABC_Carb_Monos_I"/>
    <property type="match status" value="1"/>
</dbReference>
<dbReference type="CDD" id="cd03215">
    <property type="entry name" value="ABC_Carb_Monos_II"/>
    <property type="match status" value="1"/>
</dbReference>
<dbReference type="FunFam" id="3.40.50.300:FF:000127">
    <property type="entry name" value="Ribose import ATP-binding protein RbsA"/>
    <property type="match status" value="1"/>
</dbReference>
<dbReference type="Gene3D" id="3.40.50.300">
    <property type="entry name" value="P-loop containing nucleotide triphosphate hydrolases"/>
    <property type="match status" value="2"/>
</dbReference>
<dbReference type="InterPro" id="IPR003593">
    <property type="entry name" value="AAA+_ATPase"/>
</dbReference>
<dbReference type="InterPro" id="IPR050107">
    <property type="entry name" value="ABC_carbohydrate_import_ATPase"/>
</dbReference>
<dbReference type="InterPro" id="IPR003439">
    <property type="entry name" value="ABC_transporter-like_ATP-bd"/>
</dbReference>
<dbReference type="InterPro" id="IPR017871">
    <property type="entry name" value="ABC_transporter-like_CS"/>
</dbReference>
<dbReference type="InterPro" id="IPR027417">
    <property type="entry name" value="P-loop_NTPase"/>
</dbReference>
<dbReference type="PANTHER" id="PTHR43790">
    <property type="entry name" value="CARBOHYDRATE TRANSPORT ATP-BINDING PROTEIN MG119-RELATED"/>
    <property type="match status" value="1"/>
</dbReference>
<dbReference type="PANTHER" id="PTHR43790:SF3">
    <property type="entry name" value="D-ALLOSE IMPORT ATP-BINDING PROTEIN ALSA-RELATED"/>
    <property type="match status" value="1"/>
</dbReference>
<dbReference type="Pfam" id="PF00005">
    <property type="entry name" value="ABC_tran"/>
    <property type="match status" value="2"/>
</dbReference>
<dbReference type="SMART" id="SM00382">
    <property type="entry name" value="AAA"/>
    <property type="match status" value="2"/>
</dbReference>
<dbReference type="SUPFAM" id="SSF52540">
    <property type="entry name" value="P-loop containing nucleoside triphosphate hydrolases"/>
    <property type="match status" value="2"/>
</dbReference>
<dbReference type="PROSITE" id="PS00211">
    <property type="entry name" value="ABC_TRANSPORTER_1"/>
    <property type="match status" value="1"/>
</dbReference>
<dbReference type="PROSITE" id="PS50893">
    <property type="entry name" value="ABC_TRANSPORTER_2"/>
    <property type="match status" value="2"/>
</dbReference>
<dbReference type="PROSITE" id="PS51254">
    <property type="entry name" value="RBSA"/>
    <property type="match status" value="1"/>
</dbReference>
<gene>
    <name evidence="1" type="primary">rbsA2</name>
    <name type="ordered locus">pRL110412</name>
</gene>
<accession>Q1M5X4</accession>
<evidence type="ECO:0000255" key="1">
    <source>
        <dbReference type="HAMAP-Rule" id="MF_01716"/>
    </source>
</evidence>
<comment type="function">
    <text evidence="1">Part of the ABC transporter complex RbsABC involved in ribose import. Responsible for energy coupling to the transport system.</text>
</comment>
<comment type="catalytic activity">
    <reaction evidence="1">
        <text>D-ribose(out) + ATP + H2O = D-ribose(in) + ADP + phosphate + H(+)</text>
        <dbReference type="Rhea" id="RHEA:29903"/>
        <dbReference type="ChEBI" id="CHEBI:15377"/>
        <dbReference type="ChEBI" id="CHEBI:15378"/>
        <dbReference type="ChEBI" id="CHEBI:30616"/>
        <dbReference type="ChEBI" id="CHEBI:43474"/>
        <dbReference type="ChEBI" id="CHEBI:47013"/>
        <dbReference type="ChEBI" id="CHEBI:456216"/>
        <dbReference type="EC" id="7.5.2.7"/>
    </reaction>
</comment>
<comment type="subunit">
    <text evidence="1">The complex is composed of an ATP-binding protein (RbsA), two transmembrane proteins (RbsC) and a solute-binding protein (RbsB).</text>
</comment>
<comment type="subcellular location">
    <subcellularLocation>
        <location evidence="1">Cell inner membrane</location>
        <topology evidence="1">Peripheral membrane protein</topology>
    </subcellularLocation>
</comment>
<comment type="similarity">
    <text evidence="1">Belongs to the ABC transporter superfamily. Ribose importer (TC 3.A.1.2.1) family.</text>
</comment>
<reference key="1">
    <citation type="journal article" date="2006" name="Genome Biol.">
        <title>The genome of Rhizobium leguminosarum has recognizable core and accessory components.</title>
        <authorList>
            <person name="Young J.P.W."/>
            <person name="Crossman L.C."/>
            <person name="Johnston A.W.B."/>
            <person name="Thomson N.R."/>
            <person name="Ghazoui Z.F."/>
            <person name="Hull K.H."/>
            <person name="Wexler M."/>
            <person name="Curson A.R.J."/>
            <person name="Todd J.D."/>
            <person name="Poole P.S."/>
            <person name="Mauchline T.H."/>
            <person name="East A.K."/>
            <person name="Quail M.A."/>
            <person name="Churcher C."/>
            <person name="Arrowsmith C."/>
            <person name="Cherevach I."/>
            <person name="Chillingworth T."/>
            <person name="Clarke K."/>
            <person name="Cronin A."/>
            <person name="Davis P."/>
            <person name="Fraser A."/>
            <person name="Hance Z."/>
            <person name="Hauser H."/>
            <person name="Jagels K."/>
            <person name="Moule S."/>
            <person name="Mungall K."/>
            <person name="Norbertczak H."/>
            <person name="Rabbinowitsch E."/>
            <person name="Sanders M."/>
            <person name="Simmonds M."/>
            <person name="Whitehead S."/>
            <person name="Parkhill J."/>
        </authorList>
    </citation>
    <scope>NUCLEOTIDE SEQUENCE [LARGE SCALE GENOMIC DNA]</scope>
    <source>
        <strain>DSM 114642 / LMG 32736 / 3841</strain>
    </source>
</reference>